<dbReference type="EMBL" id="AE005674">
    <property type="status" value="NOT_ANNOTATED_CDS"/>
    <property type="molecule type" value="Genomic_DNA"/>
</dbReference>
<dbReference type="EMBL" id="AE014073">
    <property type="protein sequence ID" value="AAP18556.1"/>
    <property type="status" value="ALT_INIT"/>
    <property type="molecule type" value="Genomic_DNA"/>
</dbReference>
<dbReference type="RefSeq" id="WP_000051841.1">
    <property type="nucleotide sequence ID" value="NZ_WPGW01000026.1"/>
</dbReference>
<dbReference type="GeneID" id="93778743"/>
<dbReference type="KEGG" id="sfx:S3497"/>
<dbReference type="PATRIC" id="fig|623.157.peg.897"/>
<dbReference type="HOGENOM" id="CLU_188292_0_0_6"/>
<dbReference type="Proteomes" id="UP000001006">
    <property type="component" value="Chromosome"/>
</dbReference>
<dbReference type="Proteomes" id="UP000002673">
    <property type="component" value="Chromosome"/>
</dbReference>
<dbReference type="GO" id="GO:0005886">
    <property type="term" value="C:plasma membrane"/>
    <property type="evidence" value="ECO:0007669"/>
    <property type="project" value="UniProtKB-SubCell"/>
</dbReference>
<dbReference type="HAMAP" id="MF_01546">
    <property type="entry name" value="AaeX"/>
    <property type="match status" value="1"/>
</dbReference>
<dbReference type="InterPro" id="IPR012451">
    <property type="entry name" value="DUF1656"/>
</dbReference>
<dbReference type="NCBIfam" id="NF008615">
    <property type="entry name" value="PRK11594.1"/>
    <property type="match status" value="1"/>
</dbReference>
<dbReference type="Pfam" id="PF07869">
    <property type="entry name" value="DUF1656"/>
    <property type="match status" value="1"/>
</dbReference>
<proteinExistence type="inferred from homology"/>
<reference key="1">
    <citation type="journal article" date="2002" name="Nucleic Acids Res.">
        <title>Genome sequence of Shigella flexneri 2a: insights into pathogenicity through comparison with genomes of Escherichia coli K12 and O157.</title>
        <authorList>
            <person name="Jin Q."/>
            <person name="Yuan Z."/>
            <person name="Xu J."/>
            <person name="Wang Y."/>
            <person name="Shen Y."/>
            <person name="Lu W."/>
            <person name="Wang J."/>
            <person name="Liu H."/>
            <person name="Yang J."/>
            <person name="Yang F."/>
            <person name="Zhang X."/>
            <person name="Zhang J."/>
            <person name="Yang G."/>
            <person name="Wu H."/>
            <person name="Qu D."/>
            <person name="Dong J."/>
            <person name="Sun L."/>
            <person name="Xue Y."/>
            <person name="Zhao A."/>
            <person name="Gao Y."/>
            <person name="Zhu J."/>
            <person name="Kan B."/>
            <person name="Ding K."/>
            <person name="Chen S."/>
            <person name="Cheng H."/>
            <person name="Yao Z."/>
            <person name="He B."/>
            <person name="Chen R."/>
            <person name="Ma D."/>
            <person name="Qiang B."/>
            <person name="Wen Y."/>
            <person name="Hou Y."/>
            <person name="Yu J."/>
        </authorList>
    </citation>
    <scope>NUCLEOTIDE SEQUENCE [LARGE SCALE GENOMIC DNA]</scope>
    <source>
        <strain>301 / Serotype 2a</strain>
    </source>
</reference>
<reference key="2">
    <citation type="journal article" date="2003" name="Infect. Immun.">
        <title>Complete genome sequence and comparative genomics of Shigella flexneri serotype 2a strain 2457T.</title>
        <authorList>
            <person name="Wei J."/>
            <person name="Goldberg M.B."/>
            <person name="Burland V."/>
            <person name="Venkatesan M.M."/>
            <person name="Deng W."/>
            <person name="Fournier G."/>
            <person name="Mayhew G.F."/>
            <person name="Plunkett G. III"/>
            <person name="Rose D.J."/>
            <person name="Darling A."/>
            <person name="Mau B."/>
            <person name="Perna N.T."/>
            <person name="Payne S.M."/>
            <person name="Runyen-Janecky L.J."/>
            <person name="Zhou S."/>
            <person name="Schwartz D.C."/>
            <person name="Blattner F.R."/>
        </authorList>
    </citation>
    <scope>NUCLEOTIDE SEQUENCE [LARGE SCALE GENOMIC DNA]</scope>
    <source>
        <strain>ATCC 700930 / 2457T / Serotype 2a</strain>
    </source>
</reference>
<name>AAEX_SHIFL</name>
<protein>
    <recommendedName>
        <fullName evidence="1">Protein AaeX</fullName>
    </recommendedName>
</protein>
<gene>
    <name evidence="1" type="primary">aaeX</name>
    <name type="ordered locus">SF3281.1</name>
    <name type="ordered locus">S3497</name>
</gene>
<comment type="subcellular location">
    <subcellularLocation>
        <location evidence="1">Cell membrane</location>
        <topology evidence="1">Multi-pass membrane protein</topology>
    </subcellularLocation>
</comment>
<comment type="similarity">
    <text evidence="1">Belongs to the AaeX family.</text>
</comment>
<comment type="sequence caution" evidence="2">
    <conflict type="erroneous initiation">
        <sequence resource="EMBL-CDS" id="AAP18556"/>
    </conflict>
</comment>
<organism>
    <name type="scientific">Shigella flexneri</name>
    <dbReference type="NCBI Taxonomy" id="623"/>
    <lineage>
        <taxon>Bacteria</taxon>
        <taxon>Pseudomonadati</taxon>
        <taxon>Pseudomonadota</taxon>
        <taxon>Gammaproteobacteria</taxon>
        <taxon>Enterobacterales</taxon>
        <taxon>Enterobacteriaceae</taxon>
        <taxon>Shigella</taxon>
    </lineage>
</organism>
<keyword id="KW-1003">Cell membrane</keyword>
<keyword id="KW-0472">Membrane</keyword>
<keyword id="KW-1185">Reference proteome</keyword>
<keyword id="KW-0812">Transmembrane</keyword>
<keyword id="KW-1133">Transmembrane helix</keyword>
<feature type="chain" id="PRO_0000215056" description="Protein AaeX">
    <location>
        <begin position="1"/>
        <end position="67"/>
    </location>
</feature>
<feature type="transmembrane region" description="Helical" evidence="1">
    <location>
        <begin position="3"/>
        <end position="23"/>
    </location>
</feature>
<feature type="transmembrane region" description="Helical" evidence="1">
    <location>
        <begin position="43"/>
        <end position="63"/>
    </location>
</feature>
<evidence type="ECO:0000255" key="1">
    <source>
        <dbReference type="HAMAP-Rule" id="MF_01546"/>
    </source>
</evidence>
<evidence type="ECO:0000305" key="2"/>
<accession>Q7UBE9</accession>
<sequence length="67" mass="7847">MSLFPVIVVFGLSFPPIFFELLLSLAIFWLVRRVLVPTGIYDFVWHPALFNTALYCCLFYLISRLFV</sequence>